<feature type="chain" id="PRO_0000447106" description="U1-ectatotoxin-Et1b subunit B" evidence="5">
    <location>
        <begin position="1"/>
        <end position="36"/>
    </location>
</feature>
<feature type="disulfide bond" evidence="1">
    <location>
        <begin position="11"/>
        <end position="33"/>
    </location>
</feature>
<feature type="disulfide bond" description="Interchain (with C-24 in subunit A)" evidence="1">
    <location>
        <position position="21"/>
    </location>
</feature>
<reference key="1">
    <citation type="journal article" date="2014" name="Toxicon">
        <title>Diversity of peptide toxins from stinging ant venoms.</title>
        <authorList>
            <person name="Aili S.R."/>
            <person name="Touchard A."/>
            <person name="Escoubas P."/>
            <person name="Padula M.P."/>
            <person name="Orivel J."/>
            <person name="Dejean A."/>
            <person name="Nicholson G.M."/>
        </authorList>
    </citation>
    <scope>REVIEW</scope>
    <scope>PROTEIN SEQUENCE</scope>
</reference>
<reference key="2">
    <citation type="journal article" date="2016" name="Toxins">
        <title>The biochemical toxin arsenal from ant venoms.</title>
        <authorList>
            <person name="Touchard A."/>
            <person name="Aili S.R."/>
            <person name="Fox E.G."/>
            <person name="Escoubas P."/>
            <person name="Orivel J."/>
            <person name="Nicholson G.M."/>
            <person name="Dejean A."/>
        </authorList>
    </citation>
    <scope>REVIEW</scope>
    <scope>NOMENCLATURE</scope>
</reference>
<organism>
    <name type="scientific">Ectatomma tuberculatum</name>
    <name type="common">Selva ant</name>
    <dbReference type="NCBI Taxonomy" id="39300"/>
    <lineage>
        <taxon>Eukaryota</taxon>
        <taxon>Metazoa</taxon>
        <taxon>Ecdysozoa</taxon>
        <taxon>Arthropoda</taxon>
        <taxon>Hexapoda</taxon>
        <taxon>Insecta</taxon>
        <taxon>Pterygota</taxon>
        <taxon>Neoptera</taxon>
        <taxon>Endopterygota</taxon>
        <taxon>Hymenoptera</taxon>
        <taxon>Apocrita</taxon>
        <taxon>Aculeata</taxon>
        <taxon>Formicoidea</taxon>
        <taxon>Formicidae</taxon>
        <taxon>Ectatomminae</taxon>
        <taxon>Ectatommini</taxon>
        <taxon>Ectatomma</taxon>
    </lineage>
</organism>
<evidence type="ECO:0000250" key="1">
    <source>
        <dbReference type="UniProtKB" id="P49343"/>
    </source>
</evidence>
<evidence type="ECO:0000303" key="2">
    <source>
    </source>
</evidence>
<evidence type="ECO:0000303" key="3">
    <source>
    </source>
</evidence>
<evidence type="ECO:0000305" key="4"/>
<evidence type="ECO:0000305" key="5">
    <source>
    </source>
</evidence>
<sequence>GLKEWAMKKMCPIAVRLAKKCDGTLATKIKEICDNL</sequence>
<protein>
    <recommendedName>
        <fullName evidence="3">U1-ectatotoxin-Et1b subunit B</fullName>
        <shortName evidence="3">U1-ECTX-Et1b subunit B</shortName>
    </recommendedName>
    <alternativeName>
        <fullName evidence="2">Ectatomin-Et2 subunit B</fullName>
    </alternativeName>
</protein>
<name>TX1BB_ECTTU</name>
<accession>P0DSL2</accession>
<dbReference type="SMR" id="P0DSL2"/>
<dbReference type="GO" id="GO:0005576">
    <property type="term" value="C:extracellular region"/>
    <property type="evidence" value="ECO:0007669"/>
    <property type="project" value="UniProtKB-SubCell"/>
</dbReference>
<dbReference type="GO" id="GO:0016020">
    <property type="term" value="C:membrane"/>
    <property type="evidence" value="ECO:0007669"/>
    <property type="project" value="UniProtKB-KW"/>
</dbReference>
<dbReference type="GO" id="GO:0044218">
    <property type="term" value="C:other organism cell membrane"/>
    <property type="evidence" value="ECO:0007669"/>
    <property type="project" value="UniProtKB-KW"/>
</dbReference>
<dbReference type="GO" id="GO:0005216">
    <property type="term" value="F:monoatomic ion channel activity"/>
    <property type="evidence" value="ECO:0007669"/>
    <property type="project" value="InterPro"/>
</dbReference>
<dbReference type="GO" id="GO:0090729">
    <property type="term" value="F:toxin activity"/>
    <property type="evidence" value="ECO:0007669"/>
    <property type="project" value="UniProtKB-KW"/>
</dbReference>
<dbReference type="InterPro" id="IPR036261">
    <property type="entry name" value="Ectatomin_sf"/>
</dbReference>
<dbReference type="SUPFAM" id="SSF47401">
    <property type="entry name" value="Ectatomin subunits"/>
    <property type="match status" value="1"/>
</dbReference>
<comment type="subunit">
    <text evidence="5">Heterodimer of subunits A and B; disulfide-linked.</text>
</comment>
<comment type="subcellular location">
    <subcellularLocation>
        <location evidence="5">Secreted</location>
    </subcellularLocation>
    <subcellularLocation>
        <location evidence="5">Target cell membrane</location>
    </subcellularLocation>
</comment>
<comment type="tissue specificity">
    <text evidence="5">Expressed by the venom gland.</text>
</comment>
<comment type="similarity">
    <text evidence="4">Belongs to the ectatomin family. Ectatomin-Et subfamily.</text>
</comment>
<proteinExistence type="evidence at protein level"/>
<keyword id="KW-0903">Direct protein sequencing</keyword>
<keyword id="KW-1015">Disulfide bond</keyword>
<keyword id="KW-0472">Membrane</keyword>
<keyword id="KW-0964">Secreted</keyword>
<keyword id="KW-1052">Target cell membrane</keyword>
<keyword id="KW-1053">Target membrane</keyword>
<keyword id="KW-0800">Toxin</keyword>